<accession>Q5HAF8</accession>
<accession>Q5FDJ3</accession>
<comment type="function">
    <text evidence="1">Catalyzes the reversible phosphorylation of UMP to UDP.</text>
</comment>
<comment type="catalytic activity">
    <reaction evidence="1">
        <text>UMP + ATP = UDP + ADP</text>
        <dbReference type="Rhea" id="RHEA:24400"/>
        <dbReference type="ChEBI" id="CHEBI:30616"/>
        <dbReference type="ChEBI" id="CHEBI:57865"/>
        <dbReference type="ChEBI" id="CHEBI:58223"/>
        <dbReference type="ChEBI" id="CHEBI:456216"/>
        <dbReference type="EC" id="2.7.4.22"/>
    </reaction>
</comment>
<comment type="activity regulation">
    <text evidence="1">Allosterically activated by GTP. Inhibited by UTP.</text>
</comment>
<comment type="pathway">
    <text evidence="1">Pyrimidine metabolism; CTP biosynthesis via de novo pathway; UDP from UMP (UMPK route): step 1/1.</text>
</comment>
<comment type="subunit">
    <text evidence="1">Homohexamer.</text>
</comment>
<comment type="subcellular location">
    <subcellularLocation>
        <location evidence="1">Cytoplasm</location>
    </subcellularLocation>
</comment>
<comment type="similarity">
    <text evidence="1">Belongs to the UMP kinase family.</text>
</comment>
<proteinExistence type="inferred from homology"/>
<keyword id="KW-0021">Allosteric enzyme</keyword>
<keyword id="KW-0067">ATP-binding</keyword>
<keyword id="KW-0963">Cytoplasm</keyword>
<keyword id="KW-0418">Kinase</keyword>
<keyword id="KW-0547">Nucleotide-binding</keyword>
<keyword id="KW-0665">Pyrimidine biosynthesis</keyword>
<keyword id="KW-0808">Transferase</keyword>
<gene>
    <name evidence="1" type="primary">pyrH</name>
    <name type="ordered locus">Erum7240</name>
    <name type="ordered locus">ERWE_CDS_07620</name>
</gene>
<sequence length="244" mass="26369">MSENSANELKYSRVLLKVSGEALMGDKGFGWDIETIDNLSHDLKEVHDLGVQLCLVVGGGNIFRGASASAPFGFERASNDYIGMLATMMNALSLQNSLEKINVQSRVLSAVSITAVCETYIRRRAIRHLEKGRIVICAAGVGNPFFTTDTAAALRGIEMGCNVIFKGTQVDGVYSADPKKVADAVRYDKISYRELLSLDLKIMDVAAVSLARDHSIPIIVFNLGKRGALADIICGGGLYTTIYN</sequence>
<evidence type="ECO:0000255" key="1">
    <source>
        <dbReference type="HAMAP-Rule" id="MF_01220"/>
    </source>
</evidence>
<protein>
    <recommendedName>
        <fullName evidence="1">Uridylate kinase</fullName>
        <shortName evidence="1">UK</shortName>
        <ecNumber evidence="1">2.7.4.22</ecNumber>
    </recommendedName>
    <alternativeName>
        <fullName evidence="1">Uridine monophosphate kinase</fullName>
        <shortName evidence="1">UMP kinase</shortName>
        <shortName evidence="1">UMPK</shortName>
    </alternativeName>
</protein>
<reference key="1">
    <citation type="journal article" date="2005" name="Proc. Natl. Acad. Sci. U.S.A.">
        <title>The genome of the heartwater agent Ehrlichia ruminantium contains multiple tandem repeats of actively variable copy number.</title>
        <authorList>
            <person name="Collins N.E."/>
            <person name="Liebenberg J."/>
            <person name="de Villiers E.P."/>
            <person name="Brayton K.A."/>
            <person name="Louw E."/>
            <person name="Pretorius A."/>
            <person name="Faber F.E."/>
            <person name="van Heerden H."/>
            <person name="Josemans A."/>
            <person name="van Kleef M."/>
            <person name="Steyn H.C."/>
            <person name="van Strijp M.F."/>
            <person name="Zweygarth E."/>
            <person name="Jongejan F."/>
            <person name="Maillard J.C."/>
            <person name="Berthier D."/>
            <person name="Botha M."/>
            <person name="Joubert F."/>
            <person name="Corton C.H."/>
            <person name="Thomson N.R."/>
            <person name="Allsopp M.T."/>
            <person name="Allsopp B.A."/>
        </authorList>
    </citation>
    <scope>NUCLEOTIDE SEQUENCE [LARGE SCALE GENOMIC DNA]</scope>
    <source>
        <strain>Welgevonden</strain>
    </source>
</reference>
<reference key="2">
    <citation type="journal article" date="2006" name="J. Bacteriol.">
        <title>Comparative genomic analysis of three strains of Ehrlichia ruminantium reveals an active process of genome size plasticity.</title>
        <authorList>
            <person name="Frutos R."/>
            <person name="Viari A."/>
            <person name="Ferraz C."/>
            <person name="Morgat A."/>
            <person name="Eychenie S."/>
            <person name="Kandassamy Y."/>
            <person name="Chantal I."/>
            <person name="Bensaid A."/>
            <person name="Coissac E."/>
            <person name="Vachiery N."/>
            <person name="Demaille J."/>
            <person name="Martinez D."/>
        </authorList>
    </citation>
    <scope>NUCLEOTIDE SEQUENCE [LARGE SCALE GENOMIC DNA]</scope>
    <source>
        <strain>Welgevonden</strain>
    </source>
</reference>
<name>PYRH_EHRRW</name>
<dbReference type="EC" id="2.7.4.22" evidence="1"/>
<dbReference type="EMBL" id="CR767821">
    <property type="protein sequence ID" value="CAH58456.1"/>
    <property type="molecule type" value="Genomic_DNA"/>
</dbReference>
<dbReference type="EMBL" id="CR925678">
    <property type="protein sequence ID" value="CAI27256.1"/>
    <property type="molecule type" value="Genomic_DNA"/>
</dbReference>
<dbReference type="RefSeq" id="WP_011155402.1">
    <property type="nucleotide sequence ID" value="NC_005295.2"/>
</dbReference>
<dbReference type="SMR" id="Q5HAF8"/>
<dbReference type="GeneID" id="33057745"/>
<dbReference type="KEGG" id="eru:Erum7240"/>
<dbReference type="KEGG" id="erw:ERWE_CDS_07620"/>
<dbReference type="eggNOG" id="COG0528">
    <property type="taxonomic scope" value="Bacteria"/>
</dbReference>
<dbReference type="HOGENOM" id="CLU_033861_0_0_5"/>
<dbReference type="UniPathway" id="UPA00159">
    <property type="reaction ID" value="UER00275"/>
</dbReference>
<dbReference type="Proteomes" id="UP000001021">
    <property type="component" value="Chromosome"/>
</dbReference>
<dbReference type="GO" id="GO:0005829">
    <property type="term" value="C:cytosol"/>
    <property type="evidence" value="ECO:0007669"/>
    <property type="project" value="TreeGrafter"/>
</dbReference>
<dbReference type="GO" id="GO:0005524">
    <property type="term" value="F:ATP binding"/>
    <property type="evidence" value="ECO:0007669"/>
    <property type="project" value="UniProtKB-KW"/>
</dbReference>
<dbReference type="GO" id="GO:0033862">
    <property type="term" value="F:UMP kinase activity"/>
    <property type="evidence" value="ECO:0007669"/>
    <property type="project" value="UniProtKB-EC"/>
</dbReference>
<dbReference type="GO" id="GO:0044210">
    <property type="term" value="P:'de novo' CTP biosynthetic process"/>
    <property type="evidence" value="ECO:0007669"/>
    <property type="project" value="UniProtKB-UniRule"/>
</dbReference>
<dbReference type="GO" id="GO:0006225">
    <property type="term" value="P:UDP biosynthetic process"/>
    <property type="evidence" value="ECO:0007669"/>
    <property type="project" value="TreeGrafter"/>
</dbReference>
<dbReference type="CDD" id="cd04254">
    <property type="entry name" value="AAK_UMPK-PyrH-Ec"/>
    <property type="match status" value="1"/>
</dbReference>
<dbReference type="FunFam" id="3.40.1160.10:FF:000001">
    <property type="entry name" value="Uridylate kinase"/>
    <property type="match status" value="1"/>
</dbReference>
<dbReference type="Gene3D" id="3.40.1160.10">
    <property type="entry name" value="Acetylglutamate kinase-like"/>
    <property type="match status" value="1"/>
</dbReference>
<dbReference type="HAMAP" id="MF_01220_B">
    <property type="entry name" value="PyrH_B"/>
    <property type="match status" value="1"/>
</dbReference>
<dbReference type="InterPro" id="IPR036393">
    <property type="entry name" value="AceGlu_kinase-like_sf"/>
</dbReference>
<dbReference type="InterPro" id="IPR001048">
    <property type="entry name" value="Asp/Glu/Uridylate_kinase"/>
</dbReference>
<dbReference type="InterPro" id="IPR011817">
    <property type="entry name" value="Uridylate_kinase"/>
</dbReference>
<dbReference type="InterPro" id="IPR015963">
    <property type="entry name" value="Uridylate_kinase_bac"/>
</dbReference>
<dbReference type="NCBIfam" id="TIGR02075">
    <property type="entry name" value="pyrH_bact"/>
    <property type="match status" value="1"/>
</dbReference>
<dbReference type="PANTHER" id="PTHR42833">
    <property type="entry name" value="URIDYLATE KINASE"/>
    <property type="match status" value="1"/>
</dbReference>
<dbReference type="PANTHER" id="PTHR42833:SF4">
    <property type="entry name" value="URIDYLATE KINASE PUMPKIN, CHLOROPLASTIC"/>
    <property type="match status" value="1"/>
</dbReference>
<dbReference type="Pfam" id="PF00696">
    <property type="entry name" value="AA_kinase"/>
    <property type="match status" value="1"/>
</dbReference>
<dbReference type="PIRSF" id="PIRSF005650">
    <property type="entry name" value="Uridylate_kin"/>
    <property type="match status" value="1"/>
</dbReference>
<dbReference type="SUPFAM" id="SSF53633">
    <property type="entry name" value="Carbamate kinase-like"/>
    <property type="match status" value="1"/>
</dbReference>
<organism>
    <name type="scientific">Ehrlichia ruminantium (strain Welgevonden)</name>
    <dbReference type="NCBI Taxonomy" id="254945"/>
    <lineage>
        <taxon>Bacteria</taxon>
        <taxon>Pseudomonadati</taxon>
        <taxon>Pseudomonadota</taxon>
        <taxon>Alphaproteobacteria</taxon>
        <taxon>Rickettsiales</taxon>
        <taxon>Anaplasmataceae</taxon>
        <taxon>Ehrlichia</taxon>
    </lineage>
</organism>
<feature type="chain" id="PRO_0000323844" description="Uridylate kinase">
    <location>
        <begin position="1"/>
        <end position="244"/>
    </location>
</feature>
<feature type="region of interest" description="Involved in allosteric activation by GTP" evidence="1">
    <location>
        <begin position="25"/>
        <end position="30"/>
    </location>
</feature>
<feature type="binding site" evidence="1">
    <location>
        <begin position="17"/>
        <end position="20"/>
    </location>
    <ligand>
        <name>ATP</name>
        <dbReference type="ChEBI" id="CHEBI:30616"/>
    </ligand>
</feature>
<feature type="binding site" evidence="1">
    <location>
        <position position="59"/>
    </location>
    <ligand>
        <name>UMP</name>
        <dbReference type="ChEBI" id="CHEBI:57865"/>
    </ligand>
</feature>
<feature type="binding site" evidence="1">
    <location>
        <position position="60"/>
    </location>
    <ligand>
        <name>ATP</name>
        <dbReference type="ChEBI" id="CHEBI:30616"/>
    </ligand>
</feature>
<feature type="binding site" evidence="1">
    <location>
        <position position="64"/>
    </location>
    <ligand>
        <name>ATP</name>
        <dbReference type="ChEBI" id="CHEBI:30616"/>
    </ligand>
</feature>
<feature type="binding site" evidence="1">
    <location>
        <position position="80"/>
    </location>
    <ligand>
        <name>UMP</name>
        <dbReference type="ChEBI" id="CHEBI:57865"/>
    </ligand>
</feature>
<feature type="binding site" evidence="1">
    <location>
        <begin position="141"/>
        <end position="148"/>
    </location>
    <ligand>
        <name>UMP</name>
        <dbReference type="ChEBI" id="CHEBI:57865"/>
    </ligand>
</feature>
<feature type="binding site" evidence="1">
    <location>
        <position position="168"/>
    </location>
    <ligand>
        <name>ATP</name>
        <dbReference type="ChEBI" id="CHEBI:30616"/>
    </ligand>
</feature>
<feature type="binding site" evidence="1">
    <location>
        <position position="169"/>
    </location>
    <ligand>
        <name>ATP</name>
        <dbReference type="ChEBI" id="CHEBI:30616"/>
    </ligand>
</feature>
<feature type="binding site" evidence="1">
    <location>
        <position position="174"/>
    </location>
    <ligand>
        <name>ATP</name>
        <dbReference type="ChEBI" id="CHEBI:30616"/>
    </ligand>
</feature>
<feature type="binding site" evidence="1">
    <location>
        <position position="177"/>
    </location>
    <ligand>
        <name>ATP</name>
        <dbReference type="ChEBI" id="CHEBI:30616"/>
    </ligand>
</feature>